<reference key="1">
    <citation type="journal article" date="1999" name="Nature">
        <title>Genomic sequence comparison of two unrelated isolates of the human gastric pathogen Helicobacter pylori.</title>
        <authorList>
            <person name="Alm R.A."/>
            <person name="Ling L.-S.L."/>
            <person name="Moir D.T."/>
            <person name="King B.L."/>
            <person name="Brown E.D."/>
            <person name="Doig P.C."/>
            <person name="Smith D.R."/>
            <person name="Noonan B."/>
            <person name="Guild B.C."/>
            <person name="deJonge B.L."/>
            <person name="Carmel G."/>
            <person name="Tummino P.J."/>
            <person name="Caruso A."/>
            <person name="Uria-Nickelsen M."/>
            <person name="Mills D.M."/>
            <person name="Ives C."/>
            <person name="Gibson R."/>
            <person name="Merberg D."/>
            <person name="Mills S.D."/>
            <person name="Jiang Q."/>
            <person name="Taylor D.E."/>
            <person name="Vovis G.F."/>
            <person name="Trust T.J."/>
        </authorList>
    </citation>
    <scope>NUCLEOTIDE SEQUENCE [LARGE SCALE GENOMIC DNA]</scope>
    <source>
        <strain>J99 / ATCC 700824</strain>
    </source>
</reference>
<feature type="chain" id="PRO_0000171908" description="L-serine dehydratase">
    <location>
        <begin position="1"/>
        <end position="455"/>
    </location>
</feature>
<name>SDHL_HELPJ</name>
<proteinExistence type="inferred from homology"/>
<evidence type="ECO:0000305" key="1"/>
<comment type="catalytic activity">
    <reaction>
        <text>L-serine = pyruvate + NH4(+)</text>
        <dbReference type="Rhea" id="RHEA:19169"/>
        <dbReference type="ChEBI" id="CHEBI:15361"/>
        <dbReference type="ChEBI" id="CHEBI:28938"/>
        <dbReference type="ChEBI" id="CHEBI:33384"/>
        <dbReference type="EC" id="4.3.1.17"/>
    </reaction>
</comment>
<comment type="cofactor">
    <cofactor evidence="1">
        <name>[4Fe-4S] cluster</name>
        <dbReference type="ChEBI" id="CHEBI:49883"/>
    </cofactor>
    <text evidence="1">Binds 1 [4Fe-4S] cluster.</text>
</comment>
<comment type="pathway">
    <text>Carbohydrate biosynthesis; gluconeogenesis.</text>
</comment>
<comment type="similarity">
    <text evidence="1">Belongs to the iron-sulfur dependent L-serine dehydratase family.</text>
</comment>
<gene>
    <name type="primary">sdaA</name>
    <name type="ordered locus">jhp_0120</name>
</gene>
<protein>
    <recommendedName>
        <fullName>L-serine dehydratase</fullName>
        <shortName>SDH</shortName>
        <ecNumber>4.3.1.17</ecNumber>
    </recommendedName>
    <alternativeName>
        <fullName>L-serine deaminase</fullName>
        <shortName>L-SD</shortName>
    </alternativeName>
</protein>
<keyword id="KW-0004">4Fe-4S</keyword>
<keyword id="KW-0312">Gluconeogenesis</keyword>
<keyword id="KW-0408">Iron</keyword>
<keyword id="KW-0411">Iron-sulfur</keyword>
<keyword id="KW-0456">Lyase</keyword>
<keyword id="KW-0479">Metal-binding</keyword>
<sequence length="455" mass="49229">MASFSILSIFKIGVGPSSSHTIGPMEAGARFCGLLKGILEQVERVQITLHGSLALTGKGHLSDEAVLIGLHGIYANELDITTKKALLHEAFENKVLKLANQHHIPFDYAKDLIFDNKPLARHQNALILKAFNAKNEVLKEETYYSVGGGFVYTEKELDNLSEEGENESVAYDFSSAKELLELCQKHQKSIAEIVRLRENALKNHPDATMTKIYHAMLECYHNGANSKERYLPGSLKVTRLAPSVKTRLEKHPTSGKDPLALIDYISLYARSIAEENASGGKVVTAPTNGACAVVPSVLSYAKNHLFENLSQKSINDFLLTSAAIGYLYKKNASLSGAEAGCQAEIGVASSMAAGGLAHLCQATTQQVLIASEIAMEHHLGLTCDPVGGLVQIPCIERNVLGAIKAISASKLALEDEYKPKVSLDEVIATMYATGKDMNEKYKETSLGGLAKTLKC</sequence>
<organism>
    <name type="scientific">Helicobacter pylori (strain J99 / ATCC 700824)</name>
    <name type="common">Campylobacter pylori J99</name>
    <dbReference type="NCBI Taxonomy" id="85963"/>
    <lineage>
        <taxon>Bacteria</taxon>
        <taxon>Pseudomonadati</taxon>
        <taxon>Campylobacterota</taxon>
        <taxon>Epsilonproteobacteria</taxon>
        <taxon>Campylobacterales</taxon>
        <taxon>Helicobacteraceae</taxon>
        <taxon>Helicobacter</taxon>
    </lineage>
</organism>
<dbReference type="EC" id="4.3.1.17"/>
<dbReference type="EMBL" id="AE001439">
    <property type="protein sequence ID" value="AAD05697.1"/>
    <property type="molecule type" value="Genomic_DNA"/>
</dbReference>
<dbReference type="PIR" id="B71971">
    <property type="entry name" value="B71971"/>
</dbReference>
<dbReference type="RefSeq" id="WP_000135987.1">
    <property type="nucleotide sequence ID" value="NC_000921.1"/>
</dbReference>
<dbReference type="SMR" id="Q9ZMU7"/>
<dbReference type="KEGG" id="hpj:jhp_0120"/>
<dbReference type="eggNOG" id="COG1760">
    <property type="taxonomic scope" value="Bacteria"/>
</dbReference>
<dbReference type="UniPathway" id="UPA00138"/>
<dbReference type="Proteomes" id="UP000000804">
    <property type="component" value="Chromosome"/>
</dbReference>
<dbReference type="GO" id="GO:0051539">
    <property type="term" value="F:4 iron, 4 sulfur cluster binding"/>
    <property type="evidence" value="ECO:0007669"/>
    <property type="project" value="UniProtKB-KW"/>
</dbReference>
<dbReference type="GO" id="GO:0003941">
    <property type="term" value="F:L-serine ammonia-lyase activity"/>
    <property type="evidence" value="ECO:0007669"/>
    <property type="project" value="UniProtKB-EC"/>
</dbReference>
<dbReference type="GO" id="GO:0046872">
    <property type="term" value="F:metal ion binding"/>
    <property type="evidence" value="ECO:0007669"/>
    <property type="project" value="UniProtKB-KW"/>
</dbReference>
<dbReference type="GO" id="GO:0006094">
    <property type="term" value="P:gluconeogenesis"/>
    <property type="evidence" value="ECO:0007669"/>
    <property type="project" value="UniProtKB-UniPathway"/>
</dbReference>
<dbReference type="FunFam" id="3.30.1330.90:FF:000001">
    <property type="entry name" value="L-serine ammonia-lyase 1"/>
    <property type="match status" value="1"/>
</dbReference>
<dbReference type="Gene3D" id="3.30.1330.90">
    <property type="entry name" value="D-3-phosphoglycerate dehydrogenase, domain 3"/>
    <property type="match status" value="1"/>
</dbReference>
<dbReference type="InterPro" id="IPR029009">
    <property type="entry name" value="ASB_dom_sf"/>
</dbReference>
<dbReference type="InterPro" id="IPR051318">
    <property type="entry name" value="Fe-S_L-Ser"/>
</dbReference>
<dbReference type="InterPro" id="IPR004644">
    <property type="entry name" value="Fe-S_L-Ser_mono"/>
</dbReference>
<dbReference type="InterPro" id="IPR005130">
    <property type="entry name" value="Ser_deHydtase-like_asu"/>
</dbReference>
<dbReference type="InterPro" id="IPR005131">
    <property type="entry name" value="Ser_deHydtase_bsu"/>
</dbReference>
<dbReference type="NCBIfam" id="TIGR00720">
    <property type="entry name" value="sda_mono"/>
    <property type="match status" value="1"/>
</dbReference>
<dbReference type="PANTHER" id="PTHR30182">
    <property type="entry name" value="L-SERINE DEHYDRATASE"/>
    <property type="match status" value="1"/>
</dbReference>
<dbReference type="PANTHER" id="PTHR30182:SF1">
    <property type="entry name" value="L-SERINE DEHYDRATASE 1"/>
    <property type="match status" value="1"/>
</dbReference>
<dbReference type="Pfam" id="PF03313">
    <property type="entry name" value="SDH_alpha"/>
    <property type="match status" value="1"/>
</dbReference>
<dbReference type="Pfam" id="PF03315">
    <property type="entry name" value="SDH_beta"/>
    <property type="match status" value="1"/>
</dbReference>
<dbReference type="SUPFAM" id="SSF143548">
    <property type="entry name" value="Serine metabolism enzymes domain"/>
    <property type="match status" value="1"/>
</dbReference>
<accession>Q9ZMU7</accession>